<name>PYRC_STAAM</name>
<sequence>MKLIKNGKVLQNGELQQADILIDGKVIKQIAPAIEPSNGVDIIDAKGHFVSPGFVDVHVHLREPGGEYKETIETGTKAAARGGFTTVCPMPNTRPVPDSVEHFEALQKLIDDNAQVRVLPYASITTRQLGKELVDFPALVKEGAFAFTDDGVGVQTASMMYEGMIEAAKVNKAIVAHCEDNSLIYGGAMHEGKRSKELGIPGIPNICESVQIARDVLLAEAAGCHYHVCHVSTKESVRVIRDAKRAGIHVTAEVTPHHLLLTEDDIPGNNAIYKMNPPLRSTEDREALLEGLLDGTIDCIATDHAPHARDEKAQPMEKAPFGIVGSETAFPLLYTHFVKNGDWTLQQLVDYLTIKPCETFNLEYGTLKENGYADLTIIDLDSEQEIKGEDFLSKADNTPFIGYKVYGNPILTMVEGEVKFEGDK</sequence>
<dbReference type="EC" id="3.5.2.3" evidence="1"/>
<dbReference type="EMBL" id="BA000017">
    <property type="protein sequence ID" value="BAB57363.1"/>
    <property type="molecule type" value="Genomic_DNA"/>
</dbReference>
<dbReference type="RefSeq" id="WP_000767028.1">
    <property type="nucleotide sequence ID" value="NC_002758.2"/>
</dbReference>
<dbReference type="SMR" id="P65905"/>
<dbReference type="MEROPS" id="M38.972"/>
<dbReference type="KEGG" id="sav:SAV1201"/>
<dbReference type="HOGENOM" id="CLU_015572_1_0_9"/>
<dbReference type="PhylomeDB" id="P65905"/>
<dbReference type="UniPathway" id="UPA00070">
    <property type="reaction ID" value="UER00117"/>
</dbReference>
<dbReference type="Proteomes" id="UP000002481">
    <property type="component" value="Chromosome"/>
</dbReference>
<dbReference type="GO" id="GO:0005737">
    <property type="term" value="C:cytoplasm"/>
    <property type="evidence" value="ECO:0007669"/>
    <property type="project" value="TreeGrafter"/>
</dbReference>
<dbReference type="GO" id="GO:0004038">
    <property type="term" value="F:allantoinase activity"/>
    <property type="evidence" value="ECO:0007669"/>
    <property type="project" value="TreeGrafter"/>
</dbReference>
<dbReference type="GO" id="GO:0004151">
    <property type="term" value="F:dihydroorotase activity"/>
    <property type="evidence" value="ECO:0007669"/>
    <property type="project" value="UniProtKB-UniRule"/>
</dbReference>
<dbReference type="GO" id="GO:0008270">
    <property type="term" value="F:zinc ion binding"/>
    <property type="evidence" value="ECO:0007669"/>
    <property type="project" value="UniProtKB-UniRule"/>
</dbReference>
<dbReference type="GO" id="GO:0044205">
    <property type="term" value="P:'de novo' UMP biosynthetic process"/>
    <property type="evidence" value="ECO:0007669"/>
    <property type="project" value="UniProtKB-UniRule"/>
</dbReference>
<dbReference type="GO" id="GO:0006145">
    <property type="term" value="P:purine nucleobase catabolic process"/>
    <property type="evidence" value="ECO:0007669"/>
    <property type="project" value="TreeGrafter"/>
</dbReference>
<dbReference type="CDD" id="cd01317">
    <property type="entry name" value="DHOase_IIa"/>
    <property type="match status" value="1"/>
</dbReference>
<dbReference type="Gene3D" id="3.20.20.140">
    <property type="entry name" value="Metal-dependent hydrolases"/>
    <property type="match status" value="1"/>
</dbReference>
<dbReference type="Gene3D" id="2.30.40.10">
    <property type="entry name" value="Urease, subunit C, domain 1"/>
    <property type="match status" value="2"/>
</dbReference>
<dbReference type="HAMAP" id="MF_00220_B">
    <property type="entry name" value="PyrC_classI_B"/>
    <property type="match status" value="1"/>
</dbReference>
<dbReference type="InterPro" id="IPR006680">
    <property type="entry name" value="Amidohydro-rel"/>
</dbReference>
<dbReference type="InterPro" id="IPR004722">
    <property type="entry name" value="DHOase"/>
</dbReference>
<dbReference type="InterPro" id="IPR050138">
    <property type="entry name" value="DHOase/Allantoinase_Hydrolase"/>
</dbReference>
<dbReference type="InterPro" id="IPR002195">
    <property type="entry name" value="Dihydroorotase_CS"/>
</dbReference>
<dbReference type="InterPro" id="IPR011059">
    <property type="entry name" value="Metal-dep_hydrolase_composite"/>
</dbReference>
<dbReference type="InterPro" id="IPR032466">
    <property type="entry name" value="Metal_Hydrolase"/>
</dbReference>
<dbReference type="NCBIfam" id="NF006837">
    <property type="entry name" value="PRK09357.1-2"/>
    <property type="match status" value="1"/>
</dbReference>
<dbReference type="NCBIfam" id="TIGR00857">
    <property type="entry name" value="pyrC_multi"/>
    <property type="match status" value="1"/>
</dbReference>
<dbReference type="PANTHER" id="PTHR43668">
    <property type="entry name" value="ALLANTOINASE"/>
    <property type="match status" value="1"/>
</dbReference>
<dbReference type="PANTHER" id="PTHR43668:SF2">
    <property type="entry name" value="ALLANTOINASE"/>
    <property type="match status" value="1"/>
</dbReference>
<dbReference type="Pfam" id="PF01979">
    <property type="entry name" value="Amidohydro_1"/>
    <property type="match status" value="1"/>
</dbReference>
<dbReference type="SUPFAM" id="SSF51338">
    <property type="entry name" value="Composite domain of metallo-dependent hydrolases"/>
    <property type="match status" value="1"/>
</dbReference>
<dbReference type="SUPFAM" id="SSF51556">
    <property type="entry name" value="Metallo-dependent hydrolases"/>
    <property type="match status" value="1"/>
</dbReference>
<dbReference type="PROSITE" id="PS00482">
    <property type="entry name" value="DIHYDROOROTASE_1"/>
    <property type="match status" value="1"/>
</dbReference>
<dbReference type="PROSITE" id="PS00483">
    <property type="entry name" value="DIHYDROOROTASE_2"/>
    <property type="match status" value="1"/>
</dbReference>
<feature type="chain" id="PRO_0000147247" description="Dihydroorotase">
    <location>
        <begin position="1"/>
        <end position="424"/>
    </location>
</feature>
<feature type="active site" evidence="1">
    <location>
        <position position="303"/>
    </location>
</feature>
<feature type="binding site" evidence="1">
    <location>
        <position position="58"/>
    </location>
    <ligand>
        <name>Zn(2+)</name>
        <dbReference type="ChEBI" id="CHEBI:29105"/>
        <label>1</label>
    </ligand>
</feature>
<feature type="binding site" evidence="1">
    <location>
        <begin position="60"/>
        <end position="62"/>
    </location>
    <ligand>
        <name>substrate</name>
    </ligand>
</feature>
<feature type="binding site" evidence="1">
    <location>
        <position position="60"/>
    </location>
    <ligand>
        <name>Zn(2+)</name>
        <dbReference type="ChEBI" id="CHEBI:29105"/>
        <label>1</label>
    </ligand>
</feature>
<feature type="binding site" evidence="1">
    <location>
        <position position="92"/>
    </location>
    <ligand>
        <name>substrate</name>
    </ligand>
</feature>
<feature type="binding site" evidence="1">
    <location>
        <position position="150"/>
    </location>
    <ligand>
        <name>Zn(2+)</name>
        <dbReference type="ChEBI" id="CHEBI:29105"/>
        <label>1</label>
    </ligand>
</feature>
<feature type="binding site" evidence="1">
    <location>
        <position position="150"/>
    </location>
    <ligand>
        <name>Zn(2+)</name>
        <dbReference type="ChEBI" id="CHEBI:29105"/>
        <label>2</label>
    </ligand>
</feature>
<feature type="binding site" evidence="1">
    <location>
        <position position="177"/>
    </location>
    <ligand>
        <name>Zn(2+)</name>
        <dbReference type="ChEBI" id="CHEBI:29105"/>
        <label>2</label>
    </ligand>
</feature>
<feature type="binding site" evidence="1">
    <location>
        <position position="230"/>
    </location>
    <ligand>
        <name>Zn(2+)</name>
        <dbReference type="ChEBI" id="CHEBI:29105"/>
        <label>2</label>
    </ligand>
</feature>
<feature type="binding site" evidence="1">
    <location>
        <position position="276"/>
    </location>
    <ligand>
        <name>substrate</name>
    </ligand>
</feature>
<feature type="binding site" evidence="1">
    <location>
        <position position="303"/>
    </location>
    <ligand>
        <name>Zn(2+)</name>
        <dbReference type="ChEBI" id="CHEBI:29105"/>
        <label>1</label>
    </ligand>
</feature>
<feature type="binding site" evidence="1">
    <location>
        <position position="307"/>
    </location>
    <ligand>
        <name>substrate</name>
    </ligand>
</feature>
<feature type="binding site" evidence="1">
    <location>
        <begin position="321"/>
        <end position="322"/>
    </location>
    <ligand>
        <name>substrate</name>
    </ligand>
</feature>
<protein>
    <recommendedName>
        <fullName evidence="1">Dihydroorotase</fullName>
        <shortName evidence="1">DHOase</shortName>
        <ecNumber evidence="1">3.5.2.3</ecNumber>
    </recommendedName>
</protein>
<accession>P65905</accession>
<accession>Q99UR7</accession>
<keyword id="KW-0378">Hydrolase</keyword>
<keyword id="KW-0479">Metal-binding</keyword>
<keyword id="KW-0665">Pyrimidine biosynthesis</keyword>
<keyword id="KW-0862">Zinc</keyword>
<proteinExistence type="inferred from homology"/>
<comment type="function">
    <text evidence="1">Catalyzes the reversible cyclization of carbamoyl aspartate to dihydroorotate.</text>
</comment>
<comment type="catalytic activity">
    <reaction evidence="1">
        <text>(S)-dihydroorotate + H2O = N-carbamoyl-L-aspartate + H(+)</text>
        <dbReference type="Rhea" id="RHEA:24296"/>
        <dbReference type="ChEBI" id="CHEBI:15377"/>
        <dbReference type="ChEBI" id="CHEBI:15378"/>
        <dbReference type="ChEBI" id="CHEBI:30864"/>
        <dbReference type="ChEBI" id="CHEBI:32814"/>
        <dbReference type="EC" id="3.5.2.3"/>
    </reaction>
</comment>
<comment type="cofactor">
    <cofactor evidence="1">
        <name>Zn(2+)</name>
        <dbReference type="ChEBI" id="CHEBI:29105"/>
    </cofactor>
    <text evidence="1">Binds 2 Zn(2+) ions per subunit.</text>
</comment>
<comment type="pathway">
    <text evidence="1">Pyrimidine metabolism; UMP biosynthesis via de novo pathway; (S)-dihydroorotate from bicarbonate: step 3/3.</text>
</comment>
<comment type="similarity">
    <text evidence="1">Belongs to the metallo-dependent hydrolases superfamily. DHOase family. Class I DHOase subfamily.</text>
</comment>
<evidence type="ECO:0000255" key="1">
    <source>
        <dbReference type="HAMAP-Rule" id="MF_00220"/>
    </source>
</evidence>
<reference key="1">
    <citation type="journal article" date="2001" name="Lancet">
        <title>Whole genome sequencing of meticillin-resistant Staphylococcus aureus.</title>
        <authorList>
            <person name="Kuroda M."/>
            <person name="Ohta T."/>
            <person name="Uchiyama I."/>
            <person name="Baba T."/>
            <person name="Yuzawa H."/>
            <person name="Kobayashi I."/>
            <person name="Cui L."/>
            <person name="Oguchi A."/>
            <person name="Aoki K."/>
            <person name="Nagai Y."/>
            <person name="Lian J.-Q."/>
            <person name="Ito T."/>
            <person name="Kanamori M."/>
            <person name="Matsumaru H."/>
            <person name="Maruyama A."/>
            <person name="Murakami H."/>
            <person name="Hosoyama A."/>
            <person name="Mizutani-Ui Y."/>
            <person name="Takahashi N.K."/>
            <person name="Sawano T."/>
            <person name="Inoue R."/>
            <person name="Kaito C."/>
            <person name="Sekimizu K."/>
            <person name="Hirakawa H."/>
            <person name="Kuhara S."/>
            <person name="Goto S."/>
            <person name="Yabuzaki J."/>
            <person name="Kanehisa M."/>
            <person name="Yamashita A."/>
            <person name="Oshima K."/>
            <person name="Furuya K."/>
            <person name="Yoshino C."/>
            <person name="Shiba T."/>
            <person name="Hattori M."/>
            <person name="Ogasawara N."/>
            <person name="Hayashi H."/>
            <person name="Hiramatsu K."/>
        </authorList>
    </citation>
    <scope>NUCLEOTIDE SEQUENCE [LARGE SCALE GENOMIC DNA]</scope>
    <source>
        <strain>Mu50 / ATCC 700699</strain>
    </source>
</reference>
<gene>
    <name evidence="1" type="primary">pyrC</name>
    <name type="ordered locus">SAV1201</name>
</gene>
<organism>
    <name type="scientific">Staphylococcus aureus (strain Mu50 / ATCC 700699)</name>
    <dbReference type="NCBI Taxonomy" id="158878"/>
    <lineage>
        <taxon>Bacteria</taxon>
        <taxon>Bacillati</taxon>
        <taxon>Bacillota</taxon>
        <taxon>Bacilli</taxon>
        <taxon>Bacillales</taxon>
        <taxon>Staphylococcaceae</taxon>
        <taxon>Staphylococcus</taxon>
    </lineage>
</organism>